<evidence type="ECO:0000255" key="1">
    <source>
        <dbReference type="HAMAP-Rule" id="MF_00406"/>
    </source>
</evidence>
<name>FABZ_FRATM</name>
<proteinExistence type="inferred from homology"/>
<protein>
    <recommendedName>
        <fullName evidence="1">3-hydroxyacyl-[acyl-carrier-protein] dehydratase FabZ</fullName>
        <ecNumber evidence="1">4.2.1.59</ecNumber>
    </recommendedName>
    <alternativeName>
        <fullName evidence="1">(3R)-hydroxymyristoyl-[acyl-carrier-protein] dehydratase</fullName>
        <shortName evidence="1">(3R)-hydroxymyristoyl-ACP dehydrase</shortName>
    </alternativeName>
    <alternativeName>
        <fullName evidence="1">Beta-hydroxyacyl-ACP dehydratase</fullName>
    </alternativeName>
</protein>
<gene>
    <name evidence="1" type="primary">fabZ</name>
    <name type="ordered locus">FTM_0328</name>
</gene>
<organism>
    <name type="scientific">Francisella tularensis subsp. mediasiatica (strain FSC147)</name>
    <dbReference type="NCBI Taxonomy" id="441952"/>
    <lineage>
        <taxon>Bacteria</taxon>
        <taxon>Pseudomonadati</taxon>
        <taxon>Pseudomonadota</taxon>
        <taxon>Gammaproteobacteria</taxon>
        <taxon>Thiotrichales</taxon>
        <taxon>Francisellaceae</taxon>
        <taxon>Francisella</taxon>
    </lineage>
</organism>
<feature type="chain" id="PRO_1000123640" description="3-hydroxyacyl-[acyl-carrier-protein] dehydratase FabZ">
    <location>
        <begin position="1"/>
        <end position="163"/>
    </location>
</feature>
<feature type="active site" evidence="1">
    <location>
        <position position="58"/>
    </location>
</feature>
<reference key="1">
    <citation type="journal article" date="2009" name="PLoS Pathog.">
        <title>Molecular evolutionary consequences of niche restriction in Francisella tularensis, a facultative intracellular pathogen.</title>
        <authorList>
            <person name="Larsson P."/>
            <person name="Elfsmark D."/>
            <person name="Svensson K."/>
            <person name="Wikstroem P."/>
            <person name="Forsman M."/>
            <person name="Brettin T."/>
            <person name="Keim P."/>
            <person name="Johansson A."/>
        </authorList>
    </citation>
    <scope>NUCLEOTIDE SEQUENCE [LARGE SCALE GENOMIC DNA]</scope>
    <source>
        <strain>FSC147</strain>
    </source>
</reference>
<accession>B2SFX1</accession>
<keyword id="KW-0963">Cytoplasm</keyword>
<keyword id="KW-0441">Lipid A biosynthesis</keyword>
<keyword id="KW-0444">Lipid biosynthesis</keyword>
<keyword id="KW-0443">Lipid metabolism</keyword>
<keyword id="KW-0456">Lyase</keyword>
<comment type="function">
    <text evidence="1">Involved in unsaturated fatty acids biosynthesis. Catalyzes the dehydration of short chain beta-hydroxyacyl-ACPs and long chain saturated and unsaturated beta-hydroxyacyl-ACPs.</text>
</comment>
<comment type="catalytic activity">
    <reaction evidence="1">
        <text>a (3R)-hydroxyacyl-[ACP] = a (2E)-enoyl-[ACP] + H2O</text>
        <dbReference type="Rhea" id="RHEA:13097"/>
        <dbReference type="Rhea" id="RHEA-COMP:9925"/>
        <dbReference type="Rhea" id="RHEA-COMP:9945"/>
        <dbReference type="ChEBI" id="CHEBI:15377"/>
        <dbReference type="ChEBI" id="CHEBI:78784"/>
        <dbReference type="ChEBI" id="CHEBI:78827"/>
        <dbReference type="EC" id="4.2.1.59"/>
    </reaction>
</comment>
<comment type="subcellular location">
    <subcellularLocation>
        <location evidence="1">Cytoplasm</location>
    </subcellularLocation>
</comment>
<comment type="similarity">
    <text evidence="1">Belongs to the thioester dehydratase family. FabZ subfamily.</text>
</comment>
<sequence>MSQFNQNNKQIDVMGIRKILPHRYPFALLDKIVDWSVEDRTIVAQKNVTINEDFFNGHFPDFPVMPGVLIVEAMAQATAILGELMAETLFAHVVEKAGGGRRTFMLAGIDKVRVKRPVVPGDVLVIESRMVKQKNIICTAESVAKVDGQIVCSAELMAAYKDY</sequence>
<dbReference type="EC" id="4.2.1.59" evidence="1"/>
<dbReference type="EMBL" id="CP000915">
    <property type="protein sequence ID" value="ACD30381.1"/>
    <property type="molecule type" value="Genomic_DNA"/>
</dbReference>
<dbReference type="SMR" id="B2SFX1"/>
<dbReference type="KEGG" id="ftm:FTM_0328"/>
<dbReference type="HOGENOM" id="CLU_078912_1_2_6"/>
<dbReference type="GO" id="GO:0005737">
    <property type="term" value="C:cytoplasm"/>
    <property type="evidence" value="ECO:0007669"/>
    <property type="project" value="UniProtKB-SubCell"/>
</dbReference>
<dbReference type="GO" id="GO:0016020">
    <property type="term" value="C:membrane"/>
    <property type="evidence" value="ECO:0007669"/>
    <property type="project" value="GOC"/>
</dbReference>
<dbReference type="GO" id="GO:0019171">
    <property type="term" value="F:(3R)-hydroxyacyl-[acyl-carrier-protein] dehydratase activity"/>
    <property type="evidence" value="ECO:0007669"/>
    <property type="project" value="UniProtKB-EC"/>
</dbReference>
<dbReference type="GO" id="GO:0006633">
    <property type="term" value="P:fatty acid biosynthetic process"/>
    <property type="evidence" value="ECO:0007669"/>
    <property type="project" value="UniProtKB-UniRule"/>
</dbReference>
<dbReference type="GO" id="GO:0009245">
    <property type="term" value="P:lipid A biosynthetic process"/>
    <property type="evidence" value="ECO:0007669"/>
    <property type="project" value="UniProtKB-UniRule"/>
</dbReference>
<dbReference type="CDD" id="cd01288">
    <property type="entry name" value="FabZ"/>
    <property type="match status" value="1"/>
</dbReference>
<dbReference type="FunFam" id="3.10.129.10:FF:000001">
    <property type="entry name" value="3-hydroxyacyl-[acyl-carrier-protein] dehydratase FabZ"/>
    <property type="match status" value="1"/>
</dbReference>
<dbReference type="Gene3D" id="3.10.129.10">
    <property type="entry name" value="Hotdog Thioesterase"/>
    <property type="match status" value="1"/>
</dbReference>
<dbReference type="HAMAP" id="MF_00406">
    <property type="entry name" value="FabZ"/>
    <property type="match status" value="1"/>
</dbReference>
<dbReference type="InterPro" id="IPR013114">
    <property type="entry name" value="FabA_FabZ"/>
</dbReference>
<dbReference type="InterPro" id="IPR010084">
    <property type="entry name" value="FabZ"/>
</dbReference>
<dbReference type="InterPro" id="IPR029069">
    <property type="entry name" value="HotDog_dom_sf"/>
</dbReference>
<dbReference type="NCBIfam" id="TIGR01750">
    <property type="entry name" value="fabZ"/>
    <property type="match status" value="1"/>
</dbReference>
<dbReference type="NCBIfam" id="NF000582">
    <property type="entry name" value="PRK00006.1"/>
    <property type="match status" value="1"/>
</dbReference>
<dbReference type="PANTHER" id="PTHR30272">
    <property type="entry name" value="3-HYDROXYACYL-[ACYL-CARRIER-PROTEIN] DEHYDRATASE"/>
    <property type="match status" value="1"/>
</dbReference>
<dbReference type="PANTHER" id="PTHR30272:SF1">
    <property type="entry name" value="3-HYDROXYACYL-[ACYL-CARRIER-PROTEIN] DEHYDRATASE"/>
    <property type="match status" value="1"/>
</dbReference>
<dbReference type="Pfam" id="PF07977">
    <property type="entry name" value="FabA"/>
    <property type="match status" value="1"/>
</dbReference>
<dbReference type="SUPFAM" id="SSF54637">
    <property type="entry name" value="Thioesterase/thiol ester dehydrase-isomerase"/>
    <property type="match status" value="1"/>
</dbReference>